<sequence>MATLKIKKGDTVQIITGKDRGLKGKVIRAYPEQNKVLVEGANRITRHTRVQQGTRGSQSGGIITQEAPIHVSNVMIVDPSDGKPTRIGYRINDDGTKVRVSRRTGTEL</sequence>
<protein>
    <recommendedName>
        <fullName evidence="1">Large ribosomal subunit protein uL24</fullName>
    </recommendedName>
    <alternativeName>
        <fullName evidence="2">50S ribosomal protein L24</fullName>
    </alternativeName>
</protein>
<evidence type="ECO:0000255" key="1">
    <source>
        <dbReference type="HAMAP-Rule" id="MF_01326"/>
    </source>
</evidence>
<evidence type="ECO:0000305" key="2"/>
<comment type="function">
    <text evidence="1">One of two assembly initiator proteins, it binds directly to the 5'-end of the 23S rRNA, where it nucleates assembly of the 50S subunit.</text>
</comment>
<comment type="function">
    <text evidence="1">One of the proteins that surrounds the polypeptide exit tunnel on the outside of the subunit.</text>
</comment>
<comment type="subunit">
    <text evidence="1">Part of the 50S ribosomal subunit.</text>
</comment>
<comment type="similarity">
    <text evidence="1">Belongs to the universal ribosomal protein uL24 family.</text>
</comment>
<gene>
    <name evidence="1" type="primary">rplX</name>
    <name type="ordered locus">Francci3_0593</name>
</gene>
<dbReference type="EMBL" id="CP000249">
    <property type="protein sequence ID" value="ABD09977.1"/>
    <property type="molecule type" value="Genomic_DNA"/>
</dbReference>
<dbReference type="SMR" id="Q2JFG5"/>
<dbReference type="STRING" id="106370.Francci3_0593"/>
<dbReference type="KEGG" id="fra:Francci3_0593"/>
<dbReference type="eggNOG" id="COG0198">
    <property type="taxonomic scope" value="Bacteria"/>
</dbReference>
<dbReference type="HOGENOM" id="CLU_093315_2_0_11"/>
<dbReference type="OrthoDB" id="9807419at2"/>
<dbReference type="PhylomeDB" id="Q2JFG5"/>
<dbReference type="Proteomes" id="UP000001937">
    <property type="component" value="Chromosome"/>
</dbReference>
<dbReference type="GO" id="GO:1990904">
    <property type="term" value="C:ribonucleoprotein complex"/>
    <property type="evidence" value="ECO:0007669"/>
    <property type="project" value="UniProtKB-KW"/>
</dbReference>
<dbReference type="GO" id="GO:0005840">
    <property type="term" value="C:ribosome"/>
    <property type="evidence" value="ECO:0007669"/>
    <property type="project" value="UniProtKB-KW"/>
</dbReference>
<dbReference type="GO" id="GO:0019843">
    <property type="term" value="F:rRNA binding"/>
    <property type="evidence" value="ECO:0007669"/>
    <property type="project" value="UniProtKB-UniRule"/>
</dbReference>
<dbReference type="GO" id="GO:0003735">
    <property type="term" value="F:structural constituent of ribosome"/>
    <property type="evidence" value="ECO:0007669"/>
    <property type="project" value="InterPro"/>
</dbReference>
<dbReference type="GO" id="GO:0006412">
    <property type="term" value="P:translation"/>
    <property type="evidence" value="ECO:0007669"/>
    <property type="project" value="UniProtKB-UniRule"/>
</dbReference>
<dbReference type="CDD" id="cd06089">
    <property type="entry name" value="KOW_RPL26"/>
    <property type="match status" value="1"/>
</dbReference>
<dbReference type="FunFam" id="2.30.30.30:FF:000004">
    <property type="entry name" value="50S ribosomal protein L24"/>
    <property type="match status" value="1"/>
</dbReference>
<dbReference type="Gene3D" id="2.30.30.30">
    <property type="match status" value="1"/>
</dbReference>
<dbReference type="HAMAP" id="MF_01326_B">
    <property type="entry name" value="Ribosomal_uL24_B"/>
    <property type="match status" value="1"/>
</dbReference>
<dbReference type="InterPro" id="IPR005824">
    <property type="entry name" value="KOW"/>
</dbReference>
<dbReference type="InterPro" id="IPR014722">
    <property type="entry name" value="Rib_uL2_dom2"/>
</dbReference>
<dbReference type="InterPro" id="IPR003256">
    <property type="entry name" value="Ribosomal_uL24"/>
</dbReference>
<dbReference type="InterPro" id="IPR005825">
    <property type="entry name" value="Ribosomal_uL24_CS"/>
</dbReference>
<dbReference type="InterPro" id="IPR041988">
    <property type="entry name" value="Ribosomal_uL24_KOW"/>
</dbReference>
<dbReference type="InterPro" id="IPR008991">
    <property type="entry name" value="Translation_prot_SH3-like_sf"/>
</dbReference>
<dbReference type="NCBIfam" id="TIGR01079">
    <property type="entry name" value="rplX_bact"/>
    <property type="match status" value="1"/>
</dbReference>
<dbReference type="PANTHER" id="PTHR12903">
    <property type="entry name" value="MITOCHONDRIAL RIBOSOMAL PROTEIN L24"/>
    <property type="match status" value="1"/>
</dbReference>
<dbReference type="Pfam" id="PF00467">
    <property type="entry name" value="KOW"/>
    <property type="match status" value="1"/>
</dbReference>
<dbReference type="Pfam" id="PF17136">
    <property type="entry name" value="ribosomal_L24"/>
    <property type="match status" value="1"/>
</dbReference>
<dbReference type="SMART" id="SM00739">
    <property type="entry name" value="KOW"/>
    <property type="match status" value="1"/>
</dbReference>
<dbReference type="SUPFAM" id="SSF50104">
    <property type="entry name" value="Translation proteins SH3-like domain"/>
    <property type="match status" value="1"/>
</dbReference>
<dbReference type="PROSITE" id="PS01108">
    <property type="entry name" value="RIBOSOMAL_L24"/>
    <property type="match status" value="1"/>
</dbReference>
<organism>
    <name type="scientific">Frankia casuarinae (strain DSM 45818 / CECT 9043 / HFP020203 / CcI3)</name>
    <dbReference type="NCBI Taxonomy" id="106370"/>
    <lineage>
        <taxon>Bacteria</taxon>
        <taxon>Bacillati</taxon>
        <taxon>Actinomycetota</taxon>
        <taxon>Actinomycetes</taxon>
        <taxon>Frankiales</taxon>
        <taxon>Frankiaceae</taxon>
        <taxon>Frankia</taxon>
    </lineage>
</organism>
<keyword id="KW-1185">Reference proteome</keyword>
<keyword id="KW-0687">Ribonucleoprotein</keyword>
<keyword id="KW-0689">Ribosomal protein</keyword>
<keyword id="KW-0694">RNA-binding</keyword>
<keyword id="KW-0699">rRNA-binding</keyword>
<name>RL24_FRACC</name>
<accession>Q2JFG5</accession>
<feature type="chain" id="PRO_0000241602" description="Large ribosomal subunit protein uL24">
    <location>
        <begin position="1"/>
        <end position="108"/>
    </location>
</feature>
<reference key="1">
    <citation type="journal article" date="2007" name="Genome Res.">
        <title>Genome characteristics of facultatively symbiotic Frankia sp. strains reflect host range and host plant biogeography.</title>
        <authorList>
            <person name="Normand P."/>
            <person name="Lapierre P."/>
            <person name="Tisa L.S."/>
            <person name="Gogarten J.P."/>
            <person name="Alloisio N."/>
            <person name="Bagnarol E."/>
            <person name="Bassi C.A."/>
            <person name="Berry A.M."/>
            <person name="Bickhart D.M."/>
            <person name="Choisne N."/>
            <person name="Couloux A."/>
            <person name="Cournoyer B."/>
            <person name="Cruveiller S."/>
            <person name="Daubin V."/>
            <person name="Demange N."/>
            <person name="Francino M.P."/>
            <person name="Goltsman E."/>
            <person name="Huang Y."/>
            <person name="Kopp O.R."/>
            <person name="Labarre L."/>
            <person name="Lapidus A."/>
            <person name="Lavire C."/>
            <person name="Marechal J."/>
            <person name="Martinez M."/>
            <person name="Mastronunzio J.E."/>
            <person name="Mullin B.C."/>
            <person name="Niemann J."/>
            <person name="Pujic P."/>
            <person name="Rawnsley T."/>
            <person name="Rouy Z."/>
            <person name="Schenowitz C."/>
            <person name="Sellstedt A."/>
            <person name="Tavares F."/>
            <person name="Tomkins J.P."/>
            <person name="Vallenet D."/>
            <person name="Valverde C."/>
            <person name="Wall L.G."/>
            <person name="Wang Y."/>
            <person name="Medigue C."/>
            <person name="Benson D.R."/>
        </authorList>
    </citation>
    <scope>NUCLEOTIDE SEQUENCE [LARGE SCALE GENOMIC DNA]</scope>
    <source>
        <strain>DSM 45818 / CECT 9043 / HFP020203 / CcI3</strain>
    </source>
</reference>
<proteinExistence type="inferred from homology"/>